<proteinExistence type="inferred from homology"/>
<keyword id="KW-0129">CBS domain</keyword>
<keyword id="KW-1003">Cell membrane</keyword>
<keyword id="KW-0472">Membrane</keyword>
<keyword id="KW-1185">Reference proteome</keyword>
<keyword id="KW-0677">Repeat</keyword>
<keyword id="KW-0812">Transmembrane</keyword>
<keyword id="KW-1133">Transmembrane helix</keyword>
<reference key="1">
    <citation type="journal article" date="1996" name="DNA Res.">
        <title>Sequence analysis of the genome of the unicellular cyanobacterium Synechocystis sp. strain PCC6803. II. Sequence determination of the entire genome and assignment of potential protein-coding regions.</title>
        <authorList>
            <person name="Kaneko T."/>
            <person name="Sato S."/>
            <person name="Kotani H."/>
            <person name="Tanaka A."/>
            <person name="Asamizu E."/>
            <person name="Nakamura Y."/>
            <person name="Miyajima N."/>
            <person name="Hirosawa M."/>
            <person name="Sugiura M."/>
            <person name="Sasamoto S."/>
            <person name="Kimura T."/>
            <person name="Hosouchi T."/>
            <person name="Matsuno A."/>
            <person name="Muraki A."/>
            <person name="Nakazaki N."/>
            <person name="Naruo K."/>
            <person name="Okumura S."/>
            <person name="Shimpo S."/>
            <person name="Takeuchi C."/>
            <person name="Wada T."/>
            <person name="Watanabe A."/>
            <person name="Yamada M."/>
            <person name="Yasuda M."/>
            <person name="Tabata S."/>
        </authorList>
    </citation>
    <scope>NUCLEOTIDE SEQUENCE [LARGE SCALE GENOMIC DNA]</scope>
    <source>
        <strain>ATCC 27184 / PCC 6803 / Kazusa</strain>
    </source>
</reference>
<dbReference type="EMBL" id="BA000022">
    <property type="protein sequence ID" value="BAA18507.1"/>
    <property type="molecule type" value="Genomic_DNA"/>
</dbReference>
<dbReference type="PIR" id="S76248">
    <property type="entry name" value="S76248"/>
</dbReference>
<dbReference type="SMR" id="P74409"/>
<dbReference type="FunCoup" id="P74409">
    <property type="interactions" value="575"/>
</dbReference>
<dbReference type="STRING" id="1148.gene:10499388"/>
<dbReference type="PaxDb" id="1148-1653594"/>
<dbReference type="EnsemblBacteria" id="BAA18507">
    <property type="protein sequence ID" value="BAA18507"/>
    <property type="gene ID" value="BAA18507"/>
</dbReference>
<dbReference type="KEGG" id="syn:sll0260"/>
<dbReference type="eggNOG" id="COG1253">
    <property type="taxonomic scope" value="Bacteria"/>
</dbReference>
<dbReference type="InParanoid" id="P74409"/>
<dbReference type="PhylomeDB" id="P74409"/>
<dbReference type="Proteomes" id="UP000001425">
    <property type="component" value="Chromosome"/>
</dbReference>
<dbReference type="GO" id="GO:0005886">
    <property type="term" value="C:plasma membrane"/>
    <property type="evidence" value="ECO:0000318"/>
    <property type="project" value="GO_Central"/>
</dbReference>
<dbReference type="GO" id="GO:0050660">
    <property type="term" value="F:flavin adenine dinucleotide binding"/>
    <property type="evidence" value="ECO:0007669"/>
    <property type="project" value="InterPro"/>
</dbReference>
<dbReference type="CDD" id="cd04590">
    <property type="entry name" value="CBS_pair_CorC_HlyC_assoc"/>
    <property type="match status" value="1"/>
</dbReference>
<dbReference type="FunFam" id="3.10.580.10:FF:000008">
    <property type="entry name" value="Integral membrane protein TerC"/>
    <property type="match status" value="1"/>
</dbReference>
<dbReference type="FunFam" id="3.30.465.10:FF:000023">
    <property type="entry name" value="Magnesium and cobalt transporter"/>
    <property type="match status" value="1"/>
</dbReference>
<dbReference type="Gene3D" id="3.30.465.10">
    <property type="match status" value="1"/>
</dbReference>
<dbReference type="Gene3D" id="3.10.580.10">
    <property type="entry name" value="CBS-domain"/>
    <property type="match status" value="1"/>
</dbReference>
<dbReference type="InterPro" id="IPR000644">
    <property type="entry name" value="CBS_dom"/>
</dbReference>
<dbReference type="InterPro" id="IPR046342">
    <property type="entry name" value="CBS_dom_sf"/>
</dbReference>
<dbReference type="InterPro" id="IPR002550">
    <property type="entry name" value="CNNM"/>
</dbReference>
<dbReference type="InterPro" id="IPR036318">
    <property type="entry name" value="FAD-bd_PCMH-like_sf"/>
</dbReference>
<dbReference type="InterPro" id="IPR016169">
    <property type="entry name" value="FAD-bd_PCMH_sub2"/>
</dbReference>
<dbReference type="InterPro" id="IPR044751">
    <property type="entry name" value="Ion_transp-like_CBS"/>
</dbReference>
<dbReference type="InterPro" id="IPR005170">
    <property type="entry name" value="Transptr-assoc_dom"/>
</dbReference>
<dbReference type="InterPro" id="IPR051676">
    <property type="entry name" value="UPF0053_domain"/>
</dbReference>
<dbReference type="PANTHER" id="PTHR43099">
    <property type="entry name" value="UPF0053 PROTEIN YRKA"/>
    <property type="match status" value="1"/>
</dbReference>
<dbReference type="PANTHER" id="PTHR43099:SF2">
    <property type="entry name" value="UPF0053 PROTEIN YRKA"/>
    <property type="match status" value="1"/>
</dbReference>
<dbReference type="Pfam" id="PF00571">
    <property type="entry name" value="CBS"/>
    <property type="match status" value="1"/>
</dbReference>
<dbReference type="Pfam" id="PF01595">
    <property type="entry name" value="CNNM"/>
    <property type="match status" value="1"/>
</dbReference>
<dbReference type="Pfam" id="PF03471">
    <property type="entry name" value="CorC_HlyC"/>
    <property type="match status" value="1"/>
</dbReference>
<dbReference type="SMART" id="SM01091">
    <property type="entry name" value="CorC_HlyC"/>
    <property type="match status" value="1"/>
</dbReference>
<dbReference type="SUPFAM" id="SSF54631">
    <property type="entry name" value="CBS-domain pair"/>
    <property type="match status" value="1"/>
</dbReference>
<dbReference type="SUPFAM" id="SSF56176">
    <property type="entry name" value="FAD-binding/transporter-associated domain-like"/>
    <property type="match status" value="1"/>
</dbReference>
<dbReference type="PROSITE" id="PS51371">
    <property type="entry name" value="CBS"/>
    <property type="match status" value="2"/>
</dbReference>
<dbReference type="PROSITE" id="PS51846">
    <property type="entry name" value="CNNM"/>
    <property type="match status" value="1"/>
</dbReference>
<protein>
    <recommendedName>
        <fullName>UPF0053 protein sll0260</fullName>
    </recommendedName>
</protein>
<accession>P74409</accession>
<comment type="subcellular location">
    <subcellularLocation>
        <location evidence="4">Cell membrane</location>
        <topology evidence="4">Multi-pass membrane protein</topology>
    </subcellularLocation>
</comment>
<comment type="similarity">
    <text evidence="4">Belongs to the UPF0053 family.</text>
</comment>
<sequence>MFSSSVELELFFIFVLVVLNGIFSGSEIAIVSARKVRLEQLAKRGNRKAKLALKLATAPNNFLSAVQIGITLIGILTGAVGGATVALRLAEFLDDIPLLAPYAGPLSISLLVGFITYLSLVVGELVPKRIALSHPEHIACGVAPAMHLVAQLTAPLVYLLGVSTDAVLRLFGITSKEASPITEEEIRVMIEQGAQAGMIDEAEQEMVERVFRLGDRPVKTLMTPRTAIAWLDVESDWEENQQEILDTPYSRFPVGRDSLDECLGFVRVKDILNSQWSGQKINLEEIVQPPLFVAENTRSLHVLEMFRASGTHLALITDEYGGIEGLVTLNDLIEAIVGSIPNDDEIQEPQIIQREDGSYLLDGLLPIDEFKEIFDIETLSNEEEGHYHTLGGFVIESLGKIPQSGDYFVSDTLRVEVVDMDGIRIDKVLVNQLPEDSSTTEEESETDN</sequence>
<feature type="chain" id="PRO_0000088383" description="UPF0053 protein sll0260">
    <location>
        <begin position="1"/>
        <end position="448"/>
    </location>
</feature>
<feature type="transmembrane region" description="Helical" evidence="1">
    <location>
        <begin position="11"/>
        <end position="31"/>
    </location>
</feature>
<feature type="transmembrane region" description="Helical" evidence="1">
    <location>
        <begin position="62"/>
        <end position="82"/>
    </location>
</feature>
<feature type="transmembrane region" description="Helical" evidence="1">
    <location>
        <begin position="106"/>
        <end position="126"/>
    </location>
</feature>
<feature type="transmembrane region" description="Helical" evidence="1">
    <location>
        <begin position="142"/>
        <end position="162"/>
    </location>
</feature>
<feature type="domain" description="CNNM transmembrane" evidence="3">
    <location>
        <begin position="2"/>
        <end position="203"/>
    </location>
</feature>
<feature type="domain" description="CBS 1" evidence="2">
    <location>
        <begin position="222"/>
        <end position="281"/>
    </location>
</feature>
<feature type="domain" description="CBS 2" evidence="2">
    <location>
        <begin position="286"/>
        <end position="345"/>
    </location>
</feature>
<organism>
    <name type="scientific">Synechocystis sp. (strain ATCC 27184 / PCC 6803 / Kazusa)</name>
    <dbReference type="NCBI Taxonomy" id="1111708"/>
    <lineage>
        <taxon>Bacteria</taxon>
        <taxon>Bacillati</taxon>
        <taxon>Cyanobacteriota</taxon>
        <taxon>Cyanophyceae</taxon>
        <taxon>Synechococcales</taxon>
        <taxon>Merismopediaceae</taxon>
        <taxon>Synechocystis</taxon>
    </lineage>
</organism>
<evidence type="ECO:0000255" key="1"/>
<evidence type="ECO:0000255" key="2">
    <source>
        <dbReference type="PROSITE-ProRule" id="PRU00703"/>
    </source>
</evidence>
<evidence type="ECO:0000255" key="3">
    <source>
        <dbReference type="PROSITE-ProRule" id="PRU01193"/>
    </source>
</evidence>
<evidence type="ECO:0000305" key="4"/>
<gene>
    <name type="ordered locus">sll0260</name>
</gene>
<name>Y260_SYNY3</name>